<name>GLUC_AQUCT</name>
<reference key="1">
    <citation type="journal article" date="1988" name="J. Biol. Chem.">
        <title>Isolation of peptide hormones from the pancreas of the bullfrog (Rana catesbeiana). Amino acid sequences of pancreatic polypeptide, oxyntomodulin, and two glucagon-like peptides.</title>
        <authorList>
            <person name="Pollock H.G."/>
            <person name="Hamilton J.W."/>
            <person name="Rouse J.B."/>
            <person name="Ebner K.E."/>
            <person name="Rawitch A.B."/>
        </authorList>
    </citation>
    <scope>PROTEIN SEQUENCE</scope>
    <source>
        <tissue>Pancreas</tissue>
    </source>
</reference>
<comment type="function">
    <molecule>Glucagon</molecule>
    <text evidence="1">Plays a key role in glucose metabolism and homeostasis. Regulates blood glucose by increasing gluconeogenesis and decreasing glycolysis.</text>
</comment>
<comment type="subcellular location">
    <subcellularLocation>
        <location>Secreted</location>
    </subcellularLocation>
</comment>
<comment type="induction">
    <text>Produced in the A cells of the islets of Langerhans in response to a drop in blood sugar concentration.</text>
</comment>
<comment type="miscellaneous">
    <text>X's in the sequence were included by homology with other species sequences.</text>
</comment>
<comment type="similarity">
    <text evidence="3">Belongs to the glucagon family.</text>
</comment>
<evidence type="ECO:0000250" key="1">
    <source>
        <dbReference type="UniProtKB" id="P01275"/>
    </source>
</evidence>
<evidence type="ECO:0000269" key="2">
    <source>
    </source>
</evidence>
<evidence type="ECO:0000305" key="3"/>
<accession>P15438</accession>
<accession>P15439</accession>
<accession>P15440</accession>
<sequence>HSQGTFTSDYSKYLDSRRAQDFVQWLMNSKRSGGISXXHADGTFTSDMSSYLEEKAAKEFVDWLIKGRPKHADGSFTSDFNKALDIKAAQEFLDWIINTPVKE</sequence>
<gene>
    <name type="primary">gcg</name>
</gene>
<keyword id="KW-0903">Direct protein sequencing</keyword>
<keyword id="KW-0372">Hormone</keyword>
<keyword id="KW-0964">Secreted</keyword>
<protein>
    <recommendedName>
        <fullName>Pro-glucagon</fullName>
    </recommendedName>
    <component>
        <recommendedName>
            <fullName>Glucagon</fullName>
        </recommendedName>
    </component>
    <component>
        <recommendedName>
            <fullName>Oxyntomodulin</fullName>
        </recommendedName>
        <alternativeName>
            <fullName>Glucagon-36</fullName>
        </alternativeName>
    </component>
    <component>
        <recommendedName>
            <fullName>Glucagon-like peptide 1</fullName>
        </recommendedName>
    </component>
    <component>
        <recommendedName>
            <fullName>Glucagon-like peptide 2</fullName>
        </recommendedName>
    </component>
</protein>
<organism>
    <name type="scientific">Aquarana catesbeiana</name>
    <name type="common">American bullfrog</name>
    <name type="synonym">Rana catesbeiana</name>
    <dbReference type="NCBI Taxonomy" id="8400"/>
    <lineage>
        <taxon>Eukaryota</taxon>
        <taxon>Metazoa</taxon>
        <taxon>Chordata</taxon>
        <taxon>Craniata</taxon>
        <taxon>Vertebrata</taxon>
        <taxon>Euteleostomi</taxon>
        <taxon>Amphibia</taxon>
        <taxon>Batrachia</taxon>
        <taxon>Anura</taxon>
        <taxon>Neobatrachia</taxon>
        <taxon>Ranoidea</taxon>
        <taxon>Ranidae</taxon>
        <taxon>Aquarana</taxon>
    </lineage>
</organism>
<proteinExistence type="evidence at protein level"/>
<dbReference type="PIR" id="B28091">
    <property type="entry name" value="GCFGB"/>
</dbReference>
<dbReference type="GO" id="GO:0005615">
    <property type="term" value="C:extracellular space"/>
    <property type="evidence" value="ECO:0007669"/>
    <property type="project" value="TreeGrafter"/>
</dbReference>
<dbReference type="GO" id="GO:0031769">
    <property type="term" value="F:glucagon receptor binding"/>
    <property type="evidence" value="ECO:0007669"/>
    <property type="project" value="TreeGrafter"/>
</dbReference>
<dbReference type="GO" id="GO:0005179">
    <property type="term" value="F:hormone activity"/>
    <property type="evidence" value="ECO:0007669"/>
    <property type="project" value="UniProtKB-KW"/>
</dbReference>
<dbReference type="GO" id="GO:0007188">
    <property type="term" value="P:adenylate cyclase-modulating G protein-coupled receptor signaling pathway"/>
    <property type="evidence" value="ECO:0007669"/>
    <property type="project" value="TreeGrafter"/>
</dbReference>
<dbReference type="GO" id="GO:0043066">
    <property type="term" value="P:negative regulation of apoptotic process"/>
    <property type="evidence" value="ECO:0007669"/>
    <property type="project" value="TreeGrafter"/>
</dbReference>
<dbReference type="GO" id="GO:0035774">
    <property type="term" value="P:positive regulation of insulin secretion involved in cellular response to glucose stimulus"/>
    <property type="evidence" value="ECO:0007669"/>
    <property type="project" value="TreeGrafter"/>
</dbReference>
<dbReference type="GO" id="GO:0010737">
    <property type="term" value="P:protein kinase A signaling"/>
    <property type="evidence" value="ECO:0007669"/>
    <property type="project" value="TreeGrafter"/>
</dbReference>
<dbReference type="Gene3D" id="6.10.250.590">
    <property type="match status" value="3"/>
</dbReference>
<dbReference type="InterPro" id="IPR015550">
    <property type="entry name" value="Glucagon"/>
</dbReference>
<dbReference type="InterPro" id="IPR000532">
    <property type="entry name" value="Glucagon_GIP_secretin_VIP"/>
</dbReference>
<dbReference type="PANTHER" id="PTHR11418">
    <property type="entry name" value="GLUCAGON"/>
    <property type="match status" value="1"/>
</dbReference>
<dbReference type="PANTHER" id="PTHR11418:SF0">
    <property type="entry name" value="PRO-GLUCAGON"/>
    <property type="match status" value="1"/>
</dbReference>
<dbReference type="Pfam" id="PF00123">
    <property type="entry name" value="Hormone_2"/>
    <property type="match status" value="3"/>
</dbReference>
<dbReference type="PRINTS" id="PR00275">
    <property type="entry name" value="GLUCAGON"/>
</dbReference>
<dbReference type="SMART" id="SM00070">
    <property type="entry name" value="GLUCA"/>
    <property type="match status" value="3"/>
</dbReference>
<dbReference type="PROSITE" id="PS00260">
    <property type="entry name" value="GLUCAGON"/>
    <property type="match status" value="3"/>
</dbReference>
<feature type="peptide" id="PRO_0000011383" description="Oxyntomodulin" evidence="2">
    <location>
        <begin position="1"/>
        <end position="36"/>
    </location>
</feature>
<feature type="peptide" id="PRO_0000011384" description="Glucagon" evidence="2">
    <location>
        <begin position="1"/>
        <end position="29"/>
    </location>
</feature>
<feature type="peptide" id="PRO_0000011385" description="Glucagon-like peptide 1" evidence="2">
    <location>
        <begin position="39"/>
        <end position="70"/>
    </location>
</feature>
<feature type="peptide" id="PRO_0000011386" description="Glucagon-like peptide 2" evidence="2">
    <location>
        <begin position="71"/>
        <end position="103"/>
    </location>
</feature>
<feature type="non-consecutive residues" evidence="3">
    <location>
        <begin position="70"/>
        <end position="71"/>
    </location>
</feature>